<dbReference type="EC" id="1.5.1.5" evidence="1"/>
<dbReference type="EC" id="3.5.4.9" evidence="1"/>
<dbReference type="EMBL" id="BX548174">
    <property type="protein sequence ID" value="CAE19528.1"/>
    <property type="molecule type" value="Genomic_DNA"/>
</dbReference>
<dbReference type="RefSeq" id="WP_011132702.1">
    <property type="nucleotide sequence ID" value="NC_005072.1"/>
</dbReference>
<dbReference type="SMR" id="Q7TU81"/>
<dbReference type="STRING" id="59919.PMM1069"/>
<dbReference type="KEGG" id="pmm:PMM1069"/>
<dbReference type="eggNOG" id="COG0190">
    <property type="taxonomic scope" value="Bacteria"/>
</dbReference>
<dbReference type="HOGENOM" id="CLU_034045_2_1_3"/>
<dbReference type="OrthoDB" id="9803580at2"/>
<dbReference type="UniPathway" id="UPA00193"/>
<dbReference type="Proteomes" id="UP000001026">
    <property type="component" value="Chromosome"/>
</dbReference>
<dbReference type="GO" id="GO:0005829">
    <property type="term" value="C:cytosol"/>
    <property type="evidence" value="ECO:0007669"/>
    <property type="project" value="TreeGrafter"/>
</dbReference>
<dbReference type="GO" id="GO:0004477">
    <property type="term" value="F:methenyltetrahydrofolate cyclohydrolase activity"/>
    <property type="evidence" value="ECO:0007669"/>
    <property type="project" value="UniProtKB-UniRule"/>
</dbReference>
<dbReference type="GO" id="GO:0004488">
    <property type="term" value="F:methylenetetrahydrofolate dehydrogenase (NADP+) activity"/>
    <property type="evidence" value="ECO:0007669"/>
    <property type="project" value="UniProtKB-UniRule"/>
</dbReference>
<dbReference type="GO" id="GO:0000105">
    <property type="term" value="P:L-histidine biosynthetic process"/>
    <property type="evidence" value="ECO:0007669"/>
    <property type="project" value="UniProtKB-KW"/>
</dbReference>
<dbReference type="GO" id="GO:0009086">
    <property type="term" value="P:methionine biosynthetic process"/>
    <property type="evidence" value="ECO:0007669"/>
    <property type="project" value="UniProtKB-KW"/>
</dbReference>
<dbReference type="GO" id="GO:0006164">
    <property type="term" value="P:purine nucleotide biosynthetic process"/>
    <property type="evidence" value="ECO:0007669"/>
    <property type="project" value="UniProtKB-KW"/>
</dbReference>
<dbReference type="GO" id="GO:0035999">
    <property type="term" value="P:tetrahydrofolate interconversion"/>
    <property type="evidence" value="ECO:0007669"/>
    <property type="project" value="UniProtKB-UniRule"/>
</dbReference>
<dbReference type="CDD" id="cd01080">
    <property type="entry name" value="NAD_bind_m-THF_DH_Cyclohyd"/>
    <property type="match status" value="1"/>
</dbReference>
<dbReference type="FunFam" id="3.40.50.720:FF:000094">
    <property type="entry name" value="Bifunctional protein FolD"/>
    <property type="match status" value="1"/>
</dbReference>
<dbReference type="FunFam" id="3.40.50.10860:FF:000005">
    <property type="entry name" value="C-1-tetrahydrofolate synthase, cytoplasmic, putative"/>
    <property type="match status" value="1"/>
</dbReference>
<dbReference type="Gene3D" id="3.40.50.10860">
    <property type="entry name" value="Leucine Dehydrogenase, chain A, domain 1"/>
    <property type="match status" value="1"/>
</dbReference>
<dbReference type="Gene3D" id="3.40.50.720">
    <property type="entry name" value="NAD(P)-binding Rossmann-like Domain"/>
    <property type="match status" value="1"/>
</dbReference>
<dbReference type="HAMAP" id="MF_01576">
    <property type="entry name" value="THF_DHG_CYH"/>
    <property type="match status" value="1"/>
</dbReference>
<dbReference type="InterPro" id="IPR046346">
    <property type="entry name" value="Aminoacid_DH-like_N_sf"/>
</dbReference>
<dbReference type="InterPro" id="IPR036291">
    <property type="entry name" value="NAD(P)-bd_dom_sf"/>
</dbReference>
<dbReference type="InterPro" id="IPR000672">
    <property type="entry name" value="THF_DH/CycHdrlase"/>
</dbReference>
<dbReference type="InterPro" id="IPR020630">
    <property type="entry name" value="THF_DH/CycHdrlase_cat_dom"/>
</dbReference>
<dbReference type="InterPro" id="IPR020867">
    <property type="entry name" value="THF_DH/CycHdrlase_CS"/>
</dbReference>
<dbReference type="InterPro" id="IPR020631">
    <property type="entry name" value="THF_DH/CycHdrlase_NAD-bd_dom"/>
</dbReference>
<dbReference type="NCBIfam" id="NF010783">
    <property type="entry name" value="PRK14186.1"/>
    <property type="match status" value="1"/>
</dbReference>
<dbReference type="PANTHER" id="PTHR48099:SF5">
    <property type="entry name" value="C-1-TETRAHYDROFOLATE SYNTHASE, CYTOPLASMIC"/>
    <property type="match status" value="1"/>
</dbReference>
<dbReference type="PANTHER" id="PTHR48099">
    <property type="entry name" value="C-1-TETRAHYDROFOLATE SYNTHASE, CYTOPLASMIC-RELATED"/>
    <property type="match status" value="1"/>
</dbReference>
<dbReference type="Pfam" id="PF00763">
    <property type="entry name" value="THF_DHG_CYH"/>
    <property type="match status" value="1"/>
</dbReference>
<dbReference type="Pfam" id="PF02882">
    <property type="entry name" value="THF_DHG_CYH_C"/>
    <property type="match status" value="1"/>
</dbReference>
<dbReference type="PRINTS" id="PR00085">
    <property type="entry name" value="THFDHDRGNASE"/>
</dbReference>
<dbReference type="SUPFAM" id="SSF53223">
    <property type="entry name" value="Aminoacid dehydrogenase-like, N-terminal domain"/>
    <property type="match status" value="1"/>
</dbReference>
<dbReference type="SUPFAM" id="SSF51735">
    <property type="entry name" value="NAD(P)-binding Rossmann-fold domains"/>
    <property type="match status" value="1"/>
</dbReference>
<dbReference type="PROSITE" id="PS00767">
    <property type="entry name" value="THF_DHG_CYH_2"/>
    <property type="match status" value="1"/>
</dbReference>
<proteinExistence type="inferred from homology"/>
<accession>Q7TU81</accession>
<organism>
    <name type="scientific">Prochlorococcus marinus subsp. pastoris (strain CCMP1986 / NIES-2087 / MED4)</name>
    <dbReference type="NCBI Taxonomy" id="59919"/>
    <lineage>
        <taxon>Bacteria</taxon>
        <taxon>Bacillati</taxon>
        <taxon>Cyanobacteriota</taxon>
        <taxon>Cyanophyceae</taxon>
        <taxon>Synechococcales</taxon>
        <taxon>Prochlorococcaceae</taxon>
        <taxon>Prochlorococcus</taxon>
    </lineage>
</organism>
<name>FOLD_PROMP</name>
<sequence>MSLKLDGKKLSLEIEERLRNYILTNKTIAKRNPGLAVIRIGEDPASGVYVGNKEKACSRVGIKSYIFHLKDTVEQKEVEQLLNKLNLDNNIDGMLLQLPISKKFDEQRLISFINPEKDVDGLNEQNIGKLVKNEQAMRSCTPAGIVNLLKSQNIKIEGKKIVVIGRSLLVGKPLSLMMLNLNATVTITHSKTINLNKICKEADILIAAAGKPNLINSSFVKEGAVIIDVGIHRLTSSDKSKTRLCGDVLLEDVIPKVFAYTPVPGGVGPMTVTMLLVNTIFSWQKQFGLSSTLNDLLP</sequence>
<feature type="chain" id="PRO_0000268438" description="Bifunctional protein FolD">
    <location>
        <begin position="1"/>
        <end position="298"/>
    </location>
</feature>
<feature type="binding site" evidence="1">
    <location>
        <begin position="165"/>
        <end position="167"/>
    </location>
    <ligand>
        <name>NADP(+)</name>
        <dbReference type="ChEBI" id="CHEBI:58349"/>
    </ligand>
</feature>
<feature type="binding site" evidence="1">
    <location>
        <position position="190"/>
    </location>
    <ligand>
        <name>NADP(+)</name>
        <dbReference type="ChEBI" id="CHEBI:58349"/>
    </ligand>
</feature>
<feature type="binding site" evidence="1">
    <location>
        <position position="231"/>
    </location>
    <ligand>
        <name>NADP(+)</name>
        <dbReference type="ChEBI" id="CHEBI:58349"/>
    </ligand>
</feature>
<reference key="1">
    <citation type="journal article" date="2003" name="Nature">
        <title>Genome divergence in two Prochlorococcus ecotypes reflects oceanic niche differentiation.</title>
        <authorList>
            <person name="Rocap G."/>
            <person name="Larimer F.W."/>
            <person name="Lamerdin J.E."/>
            <person name="Malfatti S."/>
            <person name="Chain P."/>
            <person name="Ahlgren N.A."/>
            <person name="Arellano A."/>
            <person name="Coleman M."/>
            <person name="Hauser L."/>
            <person name="Hess W.R."/>
            <person name="Johnson Z.I."/>
            <person name="Land M.L."/>
            <person name="Lindell D."/>
            <person name="Post A.F."/>
            <person name="Regala W."/>
            <person name="Shah M."/>
            <person name="Shaw S.L."/>
            <person name="Steglich C."/>
            <person name="Sullivan M.B."/>
            <person name="Ting C.S."/>
            <person name="Tolonen A."/>
            <person name="Webb E.A."/>
            <person name="Zinser E.R."/>
            <person name="Chisholm S.W."/>
        </authorList>
    </citation>
    <scope>NUCLEOTIDE SEQUENCE [LARGE SCALE GENOMIC DNA]</scope>
    <source>
        <strain>CCMP1986 / NIES-2087 / MED4</strain>
    </source>
</reference>
<comment type="function">
    <text evidence="1">Catalyzes the oxidation of 5,10-methylenetetrahydrofolate to 5,10-methenyltetrahydrofolate and then the hydrolysis of 5,10-methenyltetrahydrofolate to 10-formyltetrahydrofolate.</text>
</comment>
<comment type="catalytic activity">
    <reaction evidence="1">
        <text>(6R)-5,10-methylene-5,6,7,8-tetrahydrofolate + NADP(+) = (6R)-5,10-methenyltetrahydrofolate + NADPH</text>
        <dbReference type="Rhea" id="RHEA:22812"/>
        <dbReference type="ChEBI" id="CHEBI:15636"/>
        <dbReference type="ChEBI" id="CHEBI:57455"/>
        <dbReference type="ChEBI" id="CHEBI:57783"/>
        <dbReference type="ChEBI" id="CHEBI:58349"/>
        <dbReference type="EC" id="1.5.1.5"/>
    </reaction>
</comment>
<comment type="catalytic activity">
    <reaction evidence="1">
        <text>(6R)-5,10-methenyltetrahydrofolate + H2O = (6R)-10-formyltetrahydrofolate + H(+)</text>
        <dbReference type="Rhea" id="RHEA:23700"/>
        <dbReference type="ChEBI" id="CHEBI:15377"/>
        <dbReference type="ChEBI" id="CHEBI:15378"/>
        <dbReference type="ChEBI" id="CHEBI:57455"/>
        <dbReference type="ChEBI" id="CHEBI:195366"/>
        <dbReference type="EC" id="3.5.4.9"/>
    </reaction>
</comment>
<comment type="pathway">
    <text evidence="1">One-carbon metabolism; tetrahydrofolate interconversion.</text>
</comment>
<comment type="subunit">
    <text evidence="1">Homodimer.</text>
</comment>
<comment type="similarity">
    <text evidence="1">Belongs to the tetrahydrofolate dehydrogenase/cyclohydrolase family.</text>
</comment>
<keyword id="KW-0028">Amino-acid biosynthesis</keyword>
<keyword id="KW-0368">Histidine biosynthesis</keyword>
<keyword id="KW-0378">Hydrolase</keyword>
<keyword id="KW-0486">Methionine biosynthesis</keyword>
<keyword id="KW-0511">Multifunctional enzyme</keyword>
<keyword id="KW-0521">NADP</keyword>
<keyword id="KW-0554">One-carbon metabolism</keyword>
<keyword id="KW-0560">Oxidoreductase</keyword>
<keyword id="KW-0658">Purine biosynthesis</keyword>
<gene>
    <name evidence="1" type="primary">folD</name>
    <name type="ordered locus">PMM1069</name>
</gene>
<evidence type="ECO:0000255" key="1">
    <source>
        <dbReference type="HAMAP-Rule" id="MF_01576"/>
    </source>
</evidence>
<protein>
    <recommendedName>
        <fullName evidence="1">Bifunctional protein FolD</fullName>
    </recommendedName>
    <domain>
        <recommendedName>
            <fullName evidence="1">Methylenetetrahydrofolate dehydrogenase</fullName>
            <ecNumber evidence="1">1.5.1.5</ecNumber>
        </recommendedName>
    </domain>
    <domain>
        <recommendedName>
            <fullName evidence="1">Methenyltetrahydrofolate cyclohydrolase</fullName>
            <ecNumber evidence="1">3.5.4.9</ecNumber>
        </recommendedName>
    </domain>
</protein>